<accession>Q72G84</accession>
<proteinExistence type="evidence at protein level"/>
<comment type="similarity">
    <text evidence="1">Belongs to the bacterial ribosomal protein bL28 family.</text>
</comment>
<keyword id="KW-0002">3D-structure</keyword>
<keyword id="KW-0687">Ribonucleoprotein</keyword>
<keyword id="KW-0689">Ribosomal protein</keyword>
<organism>
    <name type="scientific">Thermus thermophilus (strain ATCC BAA-163 / DSM 7039 / HB27)</name>
    <dbReference type="NCBI Taxonomy" id="262724"/>
    <lineage>
        <taxon>Bacteria</taxon>
        <taxon>Thermotogati</taxon>
        <taxon>Deinococcota</taxon>
        <taxon>Deinococci</taxon>
        <taxon>Thermales</taxon>
        <taxon>Thermaceae</taxon>
        <taxon>Thermus</taxon>
    </lineage>
</organism>
<sequence>MSKVCEISGKRPIVANSIQRRGKAKREGGVGKKTTGISKRRQYPNLQKVRVRVAGQEITFRVAASHIPKVYELVERAKGLRLEGLSPKEIKKELLKLL</sequence>
<evidence type="ECO:0000255" key="1">
    <source>
        <dbReference type="HAMAP-Rule" id="MF_00373"/>
    </source>
</evidence>
<evidence type="ECO:0000305" key="2"/>
<evidence type="ECO:0007829" key="3">
    <source>
        <dbReference type="PDB" id="4V63"/>
    </source>
</evidence>
<evidence type="ECO:0007829" key="4">
    <source>
        <dbReference type="PDB" id="4V67"/>
    </source>
</evidence>
<evidence type="ECO:0007829" key="5">
    <source>
        <dbReference type="PDB" id="4V9K"/>
    </source>
</evidence>
<evidence type="ECO:0007829" key="6">
    <source>
        <dbReference type="PDB" id="4V9L"/>
    </source>
</evidence>
<feature type="chain" id="PRO_1000121704" description="Large ribosomal subunit protein bL28">
    <location>
        <begin position="1"/>
        <end position="98"/>
    </location>
</feature>
<feature type="turn" evidence="5">
    <location>
        <begin position="6"/>
        <end position="8"/>
    </location>
</feature>
<feature type="turn" evidence="3">
    <location>
        <begin position="10"/>
        <end position="13"/>
    </location>
</feature>
<feature type="strand" evidence="6">
    <location>
        <begin position="15"/>
        <end position="18"/>
    </location>
</feature>
<feature type="strand" evidence="3">
    <location>
        <begin position="19"/>
        <end position="21"/>
    </location>
</feature>
<feature type="strand" evidence="4">
    <location>
        <begin position="29"/>
        <end position="31"/>
    </location>
</feature>
<feature type="strand" evidence="5">
    <location>
        <begin position="32"/>
        <end position="34"/>
    </location>
</feature>
<feature type="strand" evidence="3">
    <location>
        <begin position="39"/>
        <end position="41"/>
    </location>
</feature>
<feature type="strand" evidence="4">
    <location>
        <begin position="46"/>
        <end position="50"/>
    </location>
</feature>
<feature type="strand" evidence="4">
    <location>
        <begin position="53"/>
        <end position="56"/>
    </location>
</feature>
<feature type="strand" evidence="4">
    <location>
        <begin position="59"/>
        <end position="64"/>
    </location>
</feature>
<feature type="helix" evidence="4">
    <location>
        <begin position="67"/>
        <end position="78"/>
    </location>
</feature>
<feature type="helix" evidence="4">
    <location>
        <begin position="87"/>
        <end position="93"/>
    </location>
</feature>
<protein>
    <recommendedName>
        <fullName evidence="1">Large ribosomal subunit protein bL28</fullName>
    </recommendedName>
    <alternativeName>
        <fullName evidence="2">50S ribosomal protein L28</fullName>
    </alternativeName>
</protein>
<reference key="1">
    <citation type="journal article" date="2004" name="Nat. Biotechnol.">
        <title>The genome sequence of the extreme thermophile Thermus thermophilus.</title>
        <authorList>
            <person name="Henne A."/>
            <person name="Brueggemann H."/>
            <person name="Raasch C."/>
            <person name="Wiezer A."/>
            <person name="Hartsch T."/>
            <person name="Liesegang H."/>
            <person name="Johann A."/>
            <person name="Lienard T."/>
            <person name="Gohl O."/>
            <person name="Martinez-Arias R."/>
            <person name="Jacobi C."/>
            <person name="Starkuviene V."/>
            <person name="Schlenczeck S."/>
            <person name="Dencker S."/>
            <person name="Huber R."/>
            <person name="Klenk H.-P."/>
            <person name="Kramer W."/>
            <person name="Merkl R."/>
            <person name="Gottschalk G."/>
            <person name="Fritz H.-J."/>
        </authorList>
    </citation>
    <scope>NUCLEOTIDE SEQUENCE [LARGE SCALE GENOMIC DNA]</scope>
    <source>
        <strain>ATCC BAA-163 / DSM 7039 / HB27</strain>
    </source>
</reference>
<dbReference type="EMBL" id="AE017221">
    <property type="protein sequence ID" value="AAS82306.1"/>
    <property type="molecule type" value="Genomic_DNA"/>
</dbReference>
<dbReference type="RefSeq" id="WP_011174314.1">
    <property type="nucleotide sequence ID" value="NC_005835.1"/>
</dbReference>
<dbReference type="PDB" id="4V4I">
    <property type="method" value="X-ray"/>
    <property type="resolution" value="3.71 A"/>
    <property type="chains" value="V=1-98"/>
</dbReference>
<dbReference type="PDB" id="4V4J">
    <property type="method" value="X-ray"/>
    <property type="resolution" value="3.83 A"/>
    <property type="chains" value="V=1-98"/>
</dbReference>
<dbReference type="PDB" id="4V63">
    <property type="method" value="X-ray"/>
    <property type="resolution" value="3.21 A"/>
    <property type="chains" value="B1/D1=1-98"/>
</dbReference>
<dbReference type="PDB" id="4V67">
    <property type="method" value="X-ray"/>
    <property type="resolution" value="3.00 A"/>
    <property type="chains" value="B1/D1=1-98"/>
</dbReference>
<dbReference type="PDB" id="4V7P">
    <property type="method" value="X-ray"/>
    <property type="resolution" value="3.62 A"/>
    <property type="chains" value="BX/CX=1-98"/>
</dbReference>
<dbReference type="PDB" id="4V83">
    <property type="method" value="X-ray"/>
    <property type="resolution" value="3.50 A"/>
    <property type="chains" value="BX/DX=8-95"/>
</dbReference>
<dbReference type="PDB" id="4V84">
    <property type="method" value="X-ray"/>
    <property type="resolution" value="3.40 A"/>
    <property type="chains" value="BX/DX=8-95"/>
</dbReference>
<dbReference type="PDB" id="4V9J">
    <property type="method" value="X-ray"/>
    <property type="resolution" value="3.86 A"/>
    <property type="chains" value="B1/D1=3-95"/>
</dbReference>
<dbReference type="PDB" id="4V9K">
    <property type="method" value="X-ray"/>
    <property type="resolution" value="3.50 A"/>
    <property type="chains" value="B1/D1=3-95"/>
</dbReference>
<dbReference type="PDB" id="4V9L">
    <property type="method" value="X-ray"/>
    <property type="resolution" value="3.50 A"/>
    <property type="chains" value="B1/D1=3-95"/>
</dbReference>
<dbReference type="PDB" id="4V9M">
    <property type="method" value="X-ray"/>
    <property type="resolution" value="4.00 A"/>
    <property type="chains" value="B1/D1=3-95"/>
</dbReference>
<dbReference type="PDB" id="4V9N">
    <property type="method" value="X-ray"/>
    <property type="resolution" value="3.40 A"/>
    <property type="chains" value="B1/D1=8-95"/>
</dbReference>
<dbReference type="PDB" id="4V9Q">
    <property type="method" value="X-ray"/>
    <property type="resolution" value="3.40 A"/>
    <property type="chains" value="AX/CX=8-95"/>
</dbReference>
<dbReference type="PDB" id="4W29">
    <property type="method" value="X-ray"/>
    <property type="resolution" value="3.80 A"/>
    <property type="chains" value="B1/D1=3-95"/>
</dbReference>
<dbReference type="PDB" id="4XEJ">
    <property type="method" value="X-ray"/>
    <property type="resolution" value="3.80 A"/>
    <property type="chains" value="AL28/BL28=8-95"/>
</dbReference>
<dbReference type="PDB" id="5J4D">
    <property type="method" value="X-ray"/>
    <property type="resolution" value="3.10 A"/>
    <property type="chains" value="DC/Y=1-98"/>
</dbReference>
<dbReference type="PDB" id="5V8I">
    <property type="method" value="X-ray"/>
    <property type="resolution" value="3.25 A"/>
    <property type="chains" value="11/21=1-98"/>
</dbReference>
<dbReference type="PDB" id="6B4V">
    <property type="method" value="X-ray"/>
    <property type="resolution" value="3.40 A"/>
    <property type="chains" value="CC/Y=1-98"/>
</dbReference>
<dbReference type="PDB" id="6BOH">
    <property type="method" value="X-ray"/>
    <property type="resolution" value="3.40 A"/>
    <property type="chains" value="DC/Y=1-98"/>
</dbReference>
<dbReference type="PDB" id="6BOK">
    <property type="method" value="X-ray"/>
    <property type="resolution" value="3.55 A"/>
    <property type="chains" value="BC/Y=1-98"/>
</dbReference>
<dbReference type="PDB" id="6N1D">
    <property type="method" value="X-ray"/>
    <property type="resolution" value="3.20 A"/>
    <property type="chains" value="AL28/BL28=1-98"/>
</dbReference>
<dbReference type="PDBsum" id="4V4I"/>
<dbReference type="PDBsum" id="4V4J"/>
<dbReference type="PDBsum" id="4V63"/>
<dbReference type="PDBsum" id="4V67"/>
<dbReference type="PDBsum" id="4V7P"/>
<dbReference type="PDBsum" id="4V83"/>
<dbReference type="PDBsum" id="4V84"/>
<dbReference type="PDBsum" id="4V9J"/>
<dbReference type="PDBsum" id="4V9K"/>
<dbReference type="PDBsum" id="4V9L"/>
<dbReference type="PDBsum" id="4V9M"/>
<dbReference type="PDBsum" id="4V9N"/>
<dbReference type="PDBsum" id="4V9Q"/>
<dbReference type="PDBsum" id="4W29"/>
<dbReference type="PDBsum" id="4XEJ"/>
<dbReference type="PDBsum" id="5J4D"/>
<dbReference type="PDBsum" id="5V8I"/>
<dbReference type="PDBsum" id="6B4V"/>
<dbReference type="PDBsum" id="6BOH"/>
<dbReference type="PDBsum" id="6BOK"/>
<dbReference type="PDBsum" id="6N1D"/>
<dbReference type="SMR" id="Q72G84"/>
<dbReference type="IntAct" id="Q72G84">
    <property type="interactions" value="4"/>
</dbReference>
<dbReference type="KEGG" id="tth:TT_C1964"/>
<dbReference type="eggNOG" id="COG0227">
    <property type="taxonomic scope" value="Bacteria"/>
</dbReference>
<dbReference type="HOGENOM" id="CLU_064548_6_0_0"/>
<dbReference type="OrthoDB" id="9805609at2"/>
<dbReference type="Proteomes" id="UP000000592">
    <property type="component" value="Chromosome"/>
</dbReference>
<dbReference type="GO" id="GO:1990904">
    <property type="term" value="C:ribonucleoprotein complex"/>
    <property type="evidence" value="ECO:0007669"/>
    <property type="project" value="UniProtKB-KW"/>
</dbReference>
<dbReference type="GO" id="GO:0005840">
    <property type="term" value="C:ribosome"/>
    <property type="evidence" value="ECO:0007669"/>
    <property type="project" value="UniProtKB-KW"/>
</dbReference>
<dbReference type="GO" id="GO:0003735">
    <property type="term" value="F:structural constituent of ribosome"/>
    <property type="evidence" value="ECO:0007669"/>
    <property type="project" value="InterPro"/>
</dbReference>
<dbReference type="GO" id="GO:0006412">
    <property type="term" value="P:translation"/>
    <property type="evidence" value="ECO:0007669"/>
    <property type="project" value="UniProtKB-UniRule"/>
</dbReference>
<dbReference type="Gene3D" id="2.20.150.30">
    <property type="match status" value="1"/>
</dbReference>
<dbReference type="Gene3D" id="3.30.160.850">
    <property type="match status" value="1"/>
</dbReference>
<dbReference type="HAMAP" id="MF_00373">
    <property type="entry name" value="Ribosomal_bL28"/>
    <property type="match status" value="1"/>
</dbReference>
<dbReference type="InterPro" id="IPR050096">
    <property type="entry name" value="Bacterial_rp_bL28"/>
</dbReference>
<dbReference type="InterPro" id="IPR026569">
    <property type="entry name" value="Ribosomal_bL28"/>
</dbReference>
<dbReference type="InterPro" id="IPR034704">
    <property type="entry name" value="Ribosomal_bL28/bL31-like_sf"/>
</dbReference>
<dbReference type="InterPro" id="IPR001383">
    <property type="entry name" value="Ribosomal_bL28_bact-type"/>
</dbReference>
<dbReference type="NCBIfam" id="TIGR00009">
    <property type="entry name" value="L28"/>
    <property type="match status" value="1"/>
</dbReference>
<dbReference type="PANTHER" id="PTHR39080">
    <property type="entry name" value="50S RIBOSOMAL PROTEIN L28"/>
    <property type="match status" value="1"/>
</dbReference>
<dbReference type="PANTHER" id="PTHR39080:SF1">
    <property type="entry name" value="LARGE RIBOSOMAL SUBUNIT PROTEIN BL28A"/>
    <property type="match status" value="1"/>
</dbReference>
<dbReference type="Pfam" id="PF00830">
    <property type="entry name" value="Ribosomal_L28"/>
    <property type="match status" value="1"/>
</dbReference>
<dbReference type="SUPFAM" id="SSF143800">
    <property type="entry name" value="L28p-like"/>
    <property type="match status" value="1"/>
</dbReference>
<gene>
    <name evidence="1" type="primary">rpmB</name>
    <name type="ordered locus">TT_C1964</name>
</gene>
<name>RL28_THET2</name>